<sequence length="9" mass="955">CFLGNCPDS</sequence>
<name>CONO2_CONML</name>
<dbReference type="GO" id="GO:0005576">
    <property type="term" value="C:extracellular region"/>
    <property type="evidence" value="ECO:0007669"/>
    <property type="project" value="UniProtKB-SubCell"/>
</dbReference>
<dbReference type="GO" id="GO:0090729">
    <property type="term" value="F:toxin activity"/>
    <property type="evidence" value="ECO:0007669"/>
    <property type="project" value="UniProtKB-KW"/>
</dbReference>
<feature type="peptide" id="PRO_0000450674" description="Conopressin-M2" evidence="4">
    <location>
        <begin position="1"/>
        <end position="9"/>
    </location>
</feature>
<feature type="site" description="Non-basic residue surely responsible of very weak activity" evidence="4">
    <location>
        <position position="8"/>
    </location>
</feature>
<feature type="modified residue" description="Serine amide" evidence="4">
    <location>
        <position position="9"/>
    </location>
</feature>
<feature type="disulfide bond" evidence="4">
    <location>
        <begin position="1"/>
        <end position="6"/>
    </location>
</feature>
<accession>P0DQM7</accession>
<protein>
    <recommendedName>
        <fullName evidence="2">Conopressin-M2</fullName>
    </recommendedName>
</protein>
<evidence type="ECO:0000269" key="1">
    <source>
    </source>
</evidence>
<evidence type="ECO:0000303" key="2">
    <source>
    </source>
</evidence>
<evidence type="ECO:0000305" key="3"/>
<evidence type="ECO:0000305" key="4">
    <source>
    </source>
</evidence>
<comment type="function">
    <text evidence="1">Shows reduced activity vasopressin-oxytocin related receptors. Is active on fish receptors, but not on their human counterpart, supporting an evolved role of this conopressin in the envenomation process. Shows weak agonist activity on the zebrafish vasopressin-2 receptor (V2R) (EC(50)=1.72 uM). Has no effect on all other receptors tested.</text>
</comment>
<comment type="subcellular location">
    <subcellularLocation>
        <location evidence="4">Secreted</location>
    </subcellularLocation>
</comment>
<comment type="tissue specificity">
    <text evidence="4">Expressed by the venom duct.</text>
</comment>
<comment type="domain">
    <text evidence="3">The cysteine framework is C-C.</text>
</comment>
<comment type="PTM">
    <text evidence="1">It is unsure whether Ser-9 is amidated or not, it is why the two forms have been synthesized. The non-amidated form shows a weaker agonist activity on the zebrafish vasopressin-2 receptor (V2R) (EC(50)=3.6 uM). The state of the C-terminal residue does not impact its 3D-structure.</text>
</comment>
<comment type="similarity">
    <text evidence="3">Belongs to the vasopressin/oxytocin family.</text>
</comment>
<keyword id="KW-0027">Amidation</keyword>
<keyword id="KW-1015">Disulfide bond</keyword>
<keyword id="KW-1213">G-protein coupled receptor impairing toxin</keyword>
<keyword id="KW-0964">Secreted</keyword>
<keyword id="KW-0800">Toxin</keyword>
<organism>
    <name type="scientific">Conus miliaris</name>
    <name type="common">Thousand-spot cone</name>
    <dbReference type="NCBI Taxonomy" id="97181"/>
    <lineage>
        <taxon>Eukaryota</taxon>
        <taxon>Metazoa</taxon>
        <taxon>Spiralia</taxon>
        <taxon>Lophotrochozoa</taxon>
        <taxon>Mollusca</taxon>
        <taxon>Gastropoda</taxon>
        <taxon>Caenogastropoda</taxon>
        <taxon>Neogastropoda</taxon>
        <taxon>Conoidea</taxon>
        <taxon>Conidae</taxon>
        <taxon>Conus</taxon>
        <taxon>Virroconus</taxon>
    </lineage>
</organism>
<proteinExistence type="evidence at protein level"/>
<reference key="1">
    <citation type="journal article" date="2020" name="Mar. Drugs">
        <title>Synthesis, pharmacological and structural characterization of novel conopressins from Conus miliaris.</title>
        <authorList>
            <person name="Giribaldi J."/>
            <person name="Ragnarsson L."/>
            <person name="Pujante T."/>
            <person name="Enjalbal C."/>
            <person name="Wilson D."/>
            <person name="Daly N.L."/>
            <person name="Lewis R.J."/>
            <person name="Dutertre S."/>
        </authorList>
    </citation>
    <scope>NUCLEOTIDE SEQUENCE [MRNA]</scope>
    <scope>FUNCTION</scope>
    <scope>SYNTHESIS</scope>
    <scope>DISULFIDE BOND</scope>
    <scope>AMIDATION AT SER-9</scope>
    <scope>STRUCTURE BY NMR</scope>
</reference>